<proteinExistence type="inferred from homology"/>
<sequence>MEAIPVLAGPTGSGKTFLALRLGEEVPVEVVSADATMVYRGLDIGTDKPTPEERARVPHHLVDVLEPHEAMSVARFLALAEEAIAHVLSRGKLPLVVGGTGYYIRALSEGLHDLPPPDPGVQEALWAELEARGLEALLAELARASPEDARRVGKNPRRLVRALEVLRRTGTPPARFPKRPPRFRYKKLVLWPDRAWLFPRLEERAKAQFARGLVEEVRGLLERYPRMPTALQAIGYKEVAGHLLGAYGLEEALERDIRAVKAYAKRQYTWFRHEPGDVVYLPRGGEEAYVGFRDWLRLHFGL</sequence>
<reference key="1">
    <citation type="journal article" date="2004" name="Nat. Biotechnol.">
        <title>The genome sequence of the extreme thermophile Thermus thermophilus.</title>
        <authorList>
            <person name="Henne A."/>
            <person name="Brueggemann H."/>
            <person name="Raasch C."/>
            <person name="Wiezer A."/>
            <person name="Hartsch T."/>
            <person name="Liesegang H."/>
            <person name="Johann A."/>
            <person name="Lienard T."/>
            <person name="Gohl O."/>
            <person name="Martinez-Arias R."/>
            <person name="Jacobi C."/>
            <person name="Starkuviene V."/>
            <person name="Schlenczeck S."/>
            <person name="Dencker S."/>
            <person name="Huber R."/>
            <person name="Klenk H.-P."/>
            <person name="Kramer W."/>
            <person name="Merkl R."/>
            <person name="Gottschalk G."/>
            <person name="Fritz H.-J."/>
        </authorList>
    </citation>
    <scope>NUCLEOTIDE SEQUENCE [LARGE SCALE GENOMIC DNA]</scope>
    <source>
        <strain>ATCC BAA-163 / DSM 7039 / HB27</strain>
    </source>
</reference>
<feature type="chain" id="PRO_0000163998" description="tRNA dimethylallyltransferase">
    <location>
        <begin position="1"/>
        <end position="302"/>
    </location>
</feature>
<feature type="binding site" evidence="1">
    <location>
        <begin position="9"/>
        <end position="16"/>
    </location>
    <ligand>
        <name>ATP</name>
        <dbReference type="ChEBI" id="CHEBI:30616"/>
    </ligand>
</feature>
<feature type="binding site" evidence="1">
    <location>
        <begin position="11"/>
        <end position="16"/>
    </location>
    <ligand>
        <name>substrate</name>
    </ligand>
</feature>
<feature type="site" description="Interaction with substrate tRNA" evidence="1">
    <location>
        <position position="100"/>
    </location>
</feature>
<comment type="function">
    <text evidence="1">Catalyzes the transfer of a dimethylallyl group onto the adenine at position 37 in tRNAs that read codons beginning with uridine, leading to the formation of N6-(dimethylallyl)adenosine (i(6)A).</text>
</comment>
<comment type="catalytic activity">
    <reaction evidence="1">
        <text>adenosine(37) in tRNA + dimethylallyl diphosphate = N(6)-dimethylallyladenosine(37) in tRNA + diphosphate</text>
        <dbReference type="Rhea" id="RHEA:26482"/>
        <dbReference type="Rhea" id="RHEA-COMP:10162"/>
        <dbReference type="Rhea" id="RHEA-COMP:10375"/>
        <dbReference type="ChEBI" id="CHEBI:33019"/>
        <dbReference type="ChEBI" id="CHEBI:57623"/>
        <dbReference type="ChEBI" id="CHEBI:74411"/>
        <dbReference type="ChEBI" id="CHEBI:74415"/>
        <dbReference type="EC" id="2.5.1.75"/>
    </reaction>
</comment>
<comment type="cofactor">
    <cofactor evidence="1">
        <name>Mg(2+)</name>
        <dbReference type="ChEBI" id="CHEBI:18420"/>
    </cofactor>
</comment>
<comment type="subunit">
    <text evidence="1">Monomer.</text>
</comment>
<comment type="similarity">
    <text evidence="1">Belongs to the IPP transferase family.</text>
</comment>
<name>MIAA_THET2</name>
<dbReference type="EC" id="2.5.1.75" evidence="1"/>
<dbReference type="EMBL" id="AE017221">
    <property type="protein sequence ID" value="AAS80552.1"/>
    <property type="molecule type" value="Genomic_DNA"/>
</dbReference>
<dbReference type="RefSeq" id="WP_011172657.1">
    <property type="nucleotide sequence ID" value="NC_005835.1"/>
</dbReference>
<dbReference type="SMR" id="Q72L59"/>
<dbReference type="KEGG" id="tth:TT_C0204"/>
<dbReference type="eggNOG" id="COG0324">
    <property type="taxonomic scope" value="Bacteria"/>
</dbReference>
<dbReference type="HOGENOM" id="CLU_032616_0_1_0"/>
<dbReference type="OrthoDB" id="9776390at2"/>
<dbReference type="Proteomes" id="UP000000592">
    <property type="component" value="Chromosome"/>
</dbReference>
<dbReference type="GO" id="GO:0005524">
    <property type="term" value="F:ATP binding"/>
    <property type="evidence" value="ECO:0007669"/>
    <property type="project" value="UniProtKB-UniRule"/>
</dbReference>
<dbReference type="GO" id="GO:0052381">
    <property type="term" value="F:tRNA dimethylallyltransferase activity"/>
    <property type="evidence" value="ECO:0007669"/>
    <property type="project" value="UniProtKB-UniRule"/>
</dbReference>
<dbReference type="GO" id="GO:0006400">
    <property type="term" value="P:tRNA modification"/>
    <property type="evidence" value="ECO:0007669"/>
    <property type="project" value="TreeGrafter"/>
</dbReference>
<dbReference type="Gene3D" id="1.10.20.140">
    <property type="match status" value="1"/>
</dbReference>
<dbReference type="Gene3D" id="3.40.50.300">
    <property type="entry name" value="P-loop containing nucleotide triphosphate hydrolases"/>
    <property type="match status" value="1"/>
</dbReference>
<dbReference type="HAMAP" id="MF_00185">
    <property type="entry name" value="IPP_trans"/>
    <property type="match status" value="1"/>
</dbReference>
<dbReference type="InterPro" id="IPR039657">
    <property type="entry name" value="Dimethylallyltransferase"/>
</dbReference>
<dbReference type="InterPro" id="IPR018022">
    <property type="entry name" value="IPT"/>
</dbReference>
<dbReference type="InterPro" id="IPR027417">
    <property type="entry name" value="P-loop_NTPase"/>
</dbReference>
<dbReference type="NCBIfam" id="TIGR00174">
    <property type="entry name" value="miaA"/>
    <property type="match status" value="1"/>
</dbReference>
<dbReference type="PANTHER" id="PTHR11088">
    <property type="entry name" value="TRNA DIMETHYLALLYLTRANSFERASE"/>
    <property type="match status" value="1"/>
</dbReference>
<dbReference type="PANTHER" id="PTHR11088:SF60">
    <property type="entry name" value="TRNA DIMETHYLALLYLTRANSFERASE"/>
    <property type="match status" value="1"/>
</dbReference>
<dbReference type="Pfam" id="PF01715">
    <property type="entry name" value="IPPT"/>
    <property type="match status" value="1"/>
</dbReference>
<dbReference type="SUPFAM" id="SSF52540">
    <property type="entry name" value="P-loop containing nucleoside triphosphate hydrolases"/>
    <property type="match status" value="1"/>
</dbReference>
<accession>Q72L59</accession>
<organism>
    <name type="scientific">Thermus thermophilus (strain ATCC BAA-163 / DSM 7039 / HB27)</name>
    <dbReference type="NCBI Taxonomy" id="262724"/>
    <lineage>
        <taxon>Bacteria</taxon>
        <taxon>Thermotogati</taxon>
        <taxon>Deinococcota</taxon>
        <taxon>Deinococci</taxon>
        <taxon>Thermales</taxon>
        <taxon>Thermaceae</taxon>
        <taxon>Thermus</taxon>
    </lineage>
</organism>
<keyword id="KW-0067">ATP-binding</keyword>
<keyword id="KW-0460">Magnesium</keyword>
<keyword id="KW-0547">Nucleotide-binding</keyword>
<keyword id="KW-0808">Transferase</keyword>
<keyword id="KW-0819">tRNA processing</keyword>
<evidence type="ECO:0000255" key="1">
    <source>
        <dbReference type="HAMAP-Rule" id="MF_00185"/>
    </source>
</evidence>
<protein>
    <recommendedName>
        <fullName evidence="1">tRNA dimethylallyltransferase</fullName>
        <ecNumber evidence="1">2.5.1.75</ecNumber>
    </recommendedName>
    <alternativeName>
        <fullName evidence="1">Dimethylallyl diphosphate:tRNA dimethylallyltransferase</fullName>
        <shortName evidence="1">DMAPP:tRNA dimethylallyltransferase</shortName>
        <shortName evidence="1">DMATase</shortName>
    </alternativeName>
    <alternativeName>
        <fullName evidence="1">Isopentenyl-diphosphate:tRNA isopentenyltransferase</fullName>
        <shortName evidence="1">IPP transferase</shortName>
        <shortName evidence="1">IPPT</shortName>
        <shortName evidence="1">IPTase</shortName>
    </alternativeName>
</protein>
<gene>
    <name evidence="1" type="primary">miaA</name>
    <name type="ordered locus">TT_C0204</name>
</gene>